<reference key="1">
    <citation type="journal article" date="1992" name="J. Bacteriol.">
        <title>Characterization and sequence of Escherichia coli pabC, the gene encoding aminodeoxychorismate lyase, a pyridoxal phosphate-containing enzyme.</title>
        <authorList>
            <person name="Green J.M."/>
            <person name="Merkel W.K."/>
            <person name="Nichols B.P."/>
        </authorList>
    </citation>
    <scope>NUCLEOTIDE SEQUENCE [GENOMIC DNA]</scope>
    <scope>PROTEIN SEQUENCE OF 1-21</scope>
    <scope>FUNCTION</scope>
    <scope>DISRUPTION PHENOTYPE</scope>
    <scope>SUBUNIT</scope>
    <scope>COFACTOR</scope>
    <source>
        <strain>K12 / W3110 / ATCC 27325 / DSM 5911</strain>
    </source>
</reference>
<reference key="2">
    <citation type="journal article" date="1996" name="DNA Res.">
        <title>A 718-kb DNA sequence of the Escherichia coli K-12 genome corresponding to the 12.7-28.0 min region on the linkage map.</title>
        <authorList>
            <person name="Oshima T."/>
            <person name="Aiba H."/>
            <person name="Baba T."/>
            <person name="Fujita K."/>
            <person name="Hayashi K."/>
            <person name="Honjo A."/>
            <person name="Ikemoto K."/>
            <person name="Inada T."/>
            <person name="Itoh T."/>
            <person name="Kajihara M."/>
            <person name="Kanai K."/>
            <person name="Kashimoto K."/>
            <person name="Kimura S."/>
            <person name="Kitagawa M."/>
            <person name="Makino K."/>
            <person name="Masuda S."/>
            <person name="Miki T."/>
            <person name="Mizobuchi K."/>
            <person name="Mori H."/>
            <person name="Motomura K."/>
            <person name="Nakamura Y."/>
            <person name="Nashimoto H."/>
            <person name="Nishio Y."/>
            <person name="Saito N."/>
            <person name="Sampei G."/>
            <person name="Seki Y."/>
            <person name="Tagami H."/>
            <person name="Takemoto K."/>
            <person name="Wada C."/>
            <person name="Yamamoto Y."/>
            <person name="Yano M."/>
            <person name="Horiuchi T."/>
        </authorList>
    </citation>
    <scope>NUCLEOTIDE SEQUENCE [LARGE SCALE GENOMIC DNA]</scope>
    <source>
        <strain>K12 / W3110 / ATCC 27325 / DSM 5911</strain>
    </source>
</reference>
<reference key="3">
    <citation type="journal article" date="1997" name="Science">
        <title>The complete genome sequence of Escherichia coli K-12.</title>
        <authorList>
            <person name="Blattner F.R."/>
            <person name="Plunkett G. III"/>
            <person name="Bloch C.A."/>
            <person name="Perna N.T."/>
            <person name="Burland V."/>
            <person name="Riley M."/>
            <person name="Collado-Vides J."/>
            <person name="Glasner J.D."/>
            <person name="Rode C.K."/>
            <person name="Mayhew G.F."/>
            <person name="Gregor J."/>
            <person name="Davis N.W."/>
            <person name="Kirkpatrick H.A."/>
            <person name="Goeden M.A."/>
            <person name="Rose D.J."/>
            <person name="Mau B."/>
            <person name="Shao Y."/>
        </authorList>
    </citation>
    <scope>NUCLEOTIDE SEQUENCE [LARGE SCALE GENOMIC DNA]</scope>
    <source>
        <strain>K12 / MG1655 / ATCC 47076</strain>
    </source>
</reference>
<reference key="4">
    <citation type="journal article" date="2006" name="Mol. Syst. Biol.">
        <title>Highly accurate genome sequences of Escherichia coli K-12 strains MG1655 and W3110.</title>
        <authorList>
            <person name="Hayashi K."/>
            <person name="Morooka N."/>
            <person name="Yamamoto Y."/>
            <person name="Fujita K."/>
            <person name="Isono K."/>
            <person name="Choi S."/>
            <person name="Ohtsubo E."/>
            <person name="Baba T."/>
            <person name="Wanner B.L."/>
            <person name="Mori H."/>
            <person name="Horiuchi T."/>
        </authorList>
    </citation>
    <scope>NUCLEOTIDE SEQUENCE [LARGE SCALE GENOMIC DNA]</scope>
    <source>
        <strain>K12 / W3110 / ATCC 27325 / DSM 5911</strain>
    </source>
</reference>
<reference key="5">
    <citation type="journal article" date="1991" name="J. Biol. Chem.">
        <title>p-aminobenzoate biosynthesis in Escherichia coli. Purification of aminodeoxychorismate lyase and cloning of pabC.</title>
        <authorList>
            <person name="Green J.M."/>
            <person name="Nichols B.P."/>
        </authorList>
    </citation>
    <scope>PROTEIN SEQUENCE OF 1-21</scope>
</reference>
<reference key="6">
    <citation type="journal article" date="1990" name="Proc. Natl. Acad. Sci. U.S.A.">
        <title>p-aminobenzoate synthesis in Escherichia coli: purification and characterization of PabB as aminodeoxychorismate synthase and enzyme X as aminodeoxychorismate lyase.</title>
        <authorList>
            <person name="Ye Q.-Z."/>
            <person name="Liu J."/>
            <person name="Walsh C.T."/>
        </authorList>
    </citation>
    <scope>FUNCTION</scope>
    <scope>CATALYTIC ACTIVITY</scope>
    <scope>SUBUNIT</scope>
</reference>
<reference key="7">
    <citation type="journal article" date="2000" name="J. Biochem.">
        <title>Three-dimensional structure of 4-amino-4-deoxychorismate lyase from Escherichia coli.</title>
        <authorList>
            <person name="Nakai T."/>
            <person name="Mizutani H."/>
            <person name="Miyahara I."/>
            <person name="Hirotsu K."/>
            <person name="Takeda S."/>
            <person name="Jhee K.-H."/>
            <person name="Yoshimura T."/>
            <person name="Esaki N."/>
        </authorList>
    </citation>
    <scope>X-RAY CRYSTALLOGRAPHY (2.2 ANGSTROMS) IN COMPLEX WITH PYRIDOXAL PHOSPHATE</scope>
    <scope>COFACTOR</scope>
    <scope>SUBUNIT</scope>
</reference>
<reference key="8">
    <citation type="journal article" date="2002" name="Biochemistry">
        <title>Structure of Escherichia coli aminodeoxychorismate synthase: architectural conservation and diversity in chorismate-utilizing enzymes.</title>
        <authorList>
            <person name="Parsons J.F."/>
            <person name="Jensen P.Y."/>
            <person name="Pachikara A.S."/>
            <person name="Howard A.J."/>
            <person name="Eisenstein E."/>
            <person name="Ladner J.E."/>
        </authorList>
    </citation>
    <scope>X-RAY CRYSTALLOGRAPHY (1.79 ANGSTROMS) IN COMPLEX WITH PYRIDOXAL PHOSPHATE</scope>
    <scope>COFACTOR</scope>
    <scope>SUBUNIT</scope>
</reference>
<dbReference type="EC" id="4.1.3.38"/>
<dbReference type="EMBL" id="M93135">
    <property type="protein sequence ID" value="AAA24267.1"/>
    <property type="molecule type" value="Genomic_DNA"/>
</dbReference>
<dbReference type="EMBL" id="U00096">
    <property type="protein sequence ID" value="AAC74180.1"/>
    <property type="molecule type" value="Genomic_DNA"/>
</dbReference>
<dbReference type="EMBL" id="AP009048">
    <property type="protein sequence ID" value="BAA35904.1"/>
    <property type="molecule type" value="Genomic_DNA"/>
</dbReference>
<dbReference type="PIR" id="A42954">
    <property type="entry name" value="A42954"/>
</dbReference>
<dbReference type="RefSeq" id="NP_415614.1">
    <property type="nucleotide sequence ID" value="NC_000913.3"/>
</dbReference>
<dbReference type="RefSeq" id="WP_000478681.1">
    <property type="nucleotide sequence ID" value="NZ_SSZK01000019.1"/>
</dbReference>
<dbReference type="PDB" id="1ET0">
    <property type="method" value="X-ray"/>
    <property type="resolution" value="2.20 A"/>
    <property type="chains" value="A=1-269"/>
</dbReference>
<dbReference type="PDB" id="1I2K">
    <property type="method" value="X-ray"/>
    <property type="resolution" value="1.79 A"/>
    <property type="chains" value="A=1-269"/>
</dbReference>
<dbReference type="PDB" id="1I2L">
    <property type="method" value="X-ray"/>
    <property type="resolution" value="2.30 A"/>
    <property type="chains" value="A=1-269"/>
</dbReference>
<dbReference type="PDBsum" id="1ET0"/>
<dbReference type="PDBsum" id="1I2K"/>
<dbReference type="PDBsum" id="1I2L"/>
<dbReference type="SMR" id="P28305"/>
<dbReference type="BioGRID" id="4259420">
    <property type="interactions" value="477"/>
</dbReference>
<dbReference type="BioGRID" id="850991">
    <property type="interactions" value="3"/>
</dbReference>
<dbReference type="DIP" id="DIP-10435N"/>
<dbReference type="FunCoup" id="P28305">
    <property type="interactions" value="435"/>
</dbReference>
<dbReference type="IntAct" id="P28305">
    <property type="interactions" value="9"/>
</dbReference>
<dbReference type="STRING" id="511145.b1096"/>
<dbReference type="BindingDB" id="P28305"/>
<dbReference type="ChEMBL" id="CHEMBL1075099"/>
<dbReference type="DrugBank" id="DB02038">
    <property type="generic name" value="D-[3-hydroxy-2-methyl-5-phosphonooxymethyl-pyridin-4-ylmethyl]-N,O-cycloserylamide"/>
</dbReference>
<dbReference type="jPOST" id="P28305"/>
<dbReference type="PaxDb" id="511145-b1096"/>
<dbReference type="EnsemblBacteria" id="AAC74180">
    <property type="protein sequence ID" value="AAC74180"/>
    <property type="gene ID" value="b1096"/>
</dbReference>
<dbReference type="GeneID" id="75203682"/>
<dbReference type="GeneID" id="946647"/>
<dbReference type="KEGG" id="ecj:JW1082"/>
<dbReference type="KEGG" id="eco:b1096"/>
<dbReference type="KEGG" id="ecoc:C3026_06625"/>
<dbReference type="PATRIC" id="fig|1411691.4.peg.1172"/>
<dbReference type="EchoBASE" id="EB1456"/>
<dbReference type="eggNOG" id="COG0115">
    <property type="taxonomic scope" value="Bacteria"/>
</dbReference>
<dbReference type="HOGENOM" id="CLU_020844_2_1_6"/>
<dbReference type="InParanoid" id="P28305"/>
<dbReference type="OMA" id="LRMEIPM"/>
<dbReference type="OrthoDB" id="9805628at2"/>
<dbReference type="PhylomeDB" id="P28305"/>
<dbReference type="BioCyc" id="EcoCyc:ADCLY-MONOMER"/>
<dbReference type="BioCyc" id="MetaCyc:ADCLY-MONOMER"/>
<dbReference type="BRENDA" id="4.1.3.38">
    <property type="organism ID" value="2026"/>
</dbReference>
<dbReference type="UniPathway" id="UPA00077">
    <property type="reaction ID" value="UER00150"/>
</dbReference>
<dbReference type="EvolutionaryTrace" id="P28305"/>
<dbReference type="PRO" id="PR:P28305"/>
<dbReference type="Proteomes" id="UP000000625">
    <property type="component" value="Chromosome"/>
</dbReference>
<dbReference type="GO" id="GO:0005829">
    <property type="term" value="C:cytosol"/>
    <property type="evidence" value="ECO:0000318"/>
    <property type="project" value="GO_Central"/>
</dbReference>
<dbReference type="GO" id="GO:0008696">
    <property type="term" value="F:4-amino-4-deoxychorismate lyase activity"/>
    <property type="evidence" value="ECO:0000314"/>
    <property type="project" value="UniProtKB"/>
</dbReference>
<dbReference type="GO" id="GO:0030170">
    <property type="term" value="F:pyridoxal phosphate binding"/>
    <property type="evidence" value="ECO:0000314"/>
    <property type="project" value="EcoCyc"/>
</dbReference>
<dbReference type="GO" id="GO:0008153">
    <property type="term" value="P:4-aminobenzoate biosynthetic process"/>
    <property type="evidence" value="ECO:0000315"/>
    <property type="project" value="EcoCyc"/>
</dbReference>
<dbReference type="GO" id="GO:0046656">
    <property type="term" value="P:folic acid biosynthetic process"/>
    <property type="evidence" value="ECO:0007669"/>
    <property type="project" value="UniProtKB-KW"/>
</dbReference>
<dbReference type="GO" id="GO:0046654">
    <property type="term" value="P:tetrahydrofolate biosynthetic process"/>
    <property type="evidence" value="ECO:0007669"/>
    <property type="project" value="UniProtKB-UniPathway"/>
</dbReference>
<dbReference type="CDD" id="cd01559">
    <property type="entry name" value="ADCL_like"/>
    <property type="match status" value="1"/>
</dbReference>
<dbReference type="FunFam" id="3.30.470.10:FF:000007">
    <property type="entry name" value="Aminodeoxychorismate lyase"/>
    <property type="match status" value="1"/>
</dbReference>
<dbReference type="FunFam" id="3.20.10.10:FF:000002">
    <property type="entry name" value="D-alanine aminotransferase"/>
    <property type="match status" value="1"/>
</dbReference>
<dbReference type="Gene3D" id="3.30.470.10">
    <property type="match status" value="1"/>
</dbReference>
<dbReference type="Gene3D" id="3.20.10.10">
    <property type="entry name" value="D-amino Acid Aminotransferase, subunit A, domain 2"/>
    <property type="match status" value="1"/>
</dbReference>
<dbReference type="InterPro" id="IPR017824">
    <property type="entry name" value="Aminodeoxychorismate_lyase_IV"/>
</dbReference>
<dbReference type="InterPro" id="IPR001544">
    <property type="entry name" value="Aminotrans_IV"/>
</dbReference>
<dbReference type="InterPro" id="IPR018300">
    <property type="entry name" value="Aminotrans_IV_CS"/>
</dbReference>
<dbReference type="InterPro" id="IPR036038">
    <property type="entry name" value="Aminotransferase-like"/>
</dbReference>
<dbReference type="InterPro" id="IPR043132">
    <property type="entry name" value="BCAT-like_C"/>
</dbReference>
<dbReference type="InterPro" id="IPR043131">
    <property type="entry name" value="BCAT-like_N"/>
</dbReference>
<dbReference type="InterPro" id="IPR050571">
    <property type="entry name" value="Class-IV_PLP-Dep_Aminotrnsfr"/>
</dbReference>
<dbReference type="NCBIfam" id="TIGR03461">
    <property type="entry name" value="pabC_Proteo"/>
    <property type="match status" value="1"/>
</dbReference>
<dbReference type="NCBIfam" id="NF004761">
    <property type="entry name" value="PRK06092.1"/>
    <property type="match status" value="1"/>
</dbReference>
<dbReference type="PANTHER" id="PTHR42743">
    <property type="entry name" value="AMINO-ACID AMINOTRANSFERASE"/>
    <property type="match status" value="1"/>
</dbReference>
<dbReference type="PANTHER" id="PTHR42743:SF2">
    <property type="entry name" value="AMINODEOXYCHORISMATE LYASE"/>
    <property type="match status" value="1"/>
</dbReference>
<dbReference type="Pfam" id="PF01063">
    <property type="entry name" value="Aminotran_4"/>
    <property type="match status" value="1"/>
</dbReference>
<dbReference type="SUPFAM" id="SSF56752">
    <property type="entry name" value="D-aminoacid aminotransferase-like PLP-dependent enzymes"/>
    <property type="match status" value="1"/>
</dbReference>
<dbReference type="PROSITE" id="PS00770">
    <property type="entry name" value="AA_TRANSFER_CLASS_4"/>
    <property type="match status" value="1"/>
</dbReference>
<name>PABC_ECOLI</name>
<feature type="chain" id="PRO_0000103305" description="Aminodeoxychorismate lyase">
    <location>
        <begin position="1"/>
        <end position="269"/>
    </location>
</feature>
<feature type="modified residue" description="N6-(pyridoxal phosphate)lysine">
    <location>
        <position position="140"/>
    </location>
</feature>
<feature type="strand" evidence="7">
    <location>
        <begin position="2"/>
        <end position="4"/>
    </location>
</feature>
<feature type="strand" evidence="7">
    <location>
        <begin position="7"/>
        <end position="10"/>
    </location>
</feature>
<feature type="helix" evidence="7">
    <location>
        <begin position="17"/>
        <end position="21"/>
    </location>
</feature>
<feature type="strand" evidence="7">
    <location>
        <begin position="24"/>
        <end position="32"/>
    </location>
</feature>
<feature type="helix" evidence="7">
    <location>
        <begin position="39"/>
        <end position="52"/>
    </location>
</feature>
<feature type="helix" evidence="7">
    <location>
        <begin position="60"/>
        <end position="74"/>
    </location>
</feature>
<feature type="strand" evidence="7">
    <location>
        <begin position="76"/>
        <end position="84"/>
    </location>
</feature>
<feature type="strand" evidence="7">
    <location>
        <begin position="101"/>
        <end position="107"/>
    </location>
</feature>
<feature type="helix" evidence="7">
    <location>
        <begin position="112"/>
        <end position="119"/>
    </location>
</feature>
<feature type="strand" evidence="7">
    <location>
        <begin position="121"/>
        <end position="125"/>
    </location>
</feature>
<feature type="turn" evidence="7">
    <location>
        <begin position="134"/>
        <end position="137"/>
    </location>
</feature>
<feature type="helix" evidence="7">
    <location>
        <begin position="145"/>
        <end position="154"/>
    </location>
</feature>
<feature type="turn" evidence="6">
    <location>
        <begin position="155"/>
        <end position="158"/>
    </location>
</feature>
<feature type="strand" evidence="7">
    <location>
        <begin position="160"/>
        <end position="166"/>
    </location>
</feature>
<feature type="strand" evidence="7">
    <location>
        <begin position="169"/>
        <end position="173"/>
    </location>
</feature>
<feature type="strand" evidence="7">
    <location>
        <begin position="175"/>
        <end position="183"/>
    </location>
</feature>
<feature type="strand" evidence="7">
    <location>
        <begin position="186"/>
        <end position="190"/>
    </location>
</feature>
<feature type="strand" evidence="7">
    <location>
        <begin position="193"/>
        <end position="197"/>
    </location>
</feature>
<feature type="helix" evidence="7">
    <location>
        <begin position="200"/>
        <end position="211"/>
    </location>
</feature>
<feature type="strand" evidence="7">
    <location>
        <begin position="212"/>
        <end position="219"/>
    </location>
</feature>
<feature type="helix" evidence="7">
    <location>
        <begin position="223"/>
        <end position="227"/>
    </location>
</feature>
<feature type="strand" evidence="7">
    <location>
        <begin position="230"/>
        <end position="235"/>
    </location>
</feature>
<feature type="strand" evidence="7">
    <location>
        <begin position="237"/>
        <end position="239"/>
    </location>
</feature>
<feature type="strand" evidence="7">
    <location>
        <begin position="241"/>
        <end position="247"/>
    </location>
</feature>
<feature type="helix" evidence="7">
    <location>
        <begin position="256"/>
        <end position="266"/>
    </location>
</feature>
<keyword id="KW-0002">3D-structure</keyword>
<keyword id="KW-0903">Direct protein sequencing</keyword>
<keyword id="KW-0289">Folate biosynthesis</keyword>
<keyword id="KW-0456">Lyase</keyword>
<keyword id="KW-0663">Pyridoxal phosphate</keyword>
<keyword id="KW-1185">Reference proteome</keyword>
<gene>
    <name type="primary">pabC</name>
    <name type="ordered locus">b1096</name>
    <name type="ordered locus">JW1082</name>
</gene>
<accession>P28305</accession>
<organism>
    <name type="scientific">Escherichia coli (strain K12)</name>
    <dbReference type="NCBI Taxonomy" id="83333"/>
    <lineage>
        <taxon>Bacteria</taxon>
        <taxon>Pseudomonadati</taxon>
        <taxon>Pseudomonadota</taxon>
        <taxon>Gammaproteobacteria</taxon>
        <taxon>Enterobacterales</taxon>
        <taxon>Enterobacteriaceae</taxon>
        <taxon>Escherichia</taxon>
    </lineage>
</organism>
<sequence length="269" mass="29715">MFLINGHKQESLAVSDRATQFGDGCFTTARVIDGKVSLLSAHIQRLQDACQRLMISCDFWPQLEQEMKTLAAEQQNGVLKVVISRGSGGRGYSTLNSGPATRILSVTAYPAHYDRLRNEGITLALSPVRLGRNPHLAGIKHLNRLEQVLIRSHLEQTNADEALVLDSEGWVTECCAANLFWRKGNVVYTPRLDQAGVNGIMRQFCIRLLAQSSYQLVEVQASLEESLQADEMVICNALMPVMPVCACGDVSFSSATLYEYLAPLCERPN</sequence>
<proteinExistence type="evidence at protein level"/>
<protein>
    <recommendedName>
        <fullName>Aminodeoxychorismate lyase</fullName>
        <ecNumber>4.1.3.38</ecNumber>
    </recommendedName>
    <alternativeName>
        <fullName>4-amino-4-deoxychorismate lyase</fullName>
        <shortName>ADC lyase</shortName>
        <shortName>ADCL</shortName>
    </alternativeName>
</protein>
<evidence type="ECO:0000269" key="1">
    <source>
    </source>
</evidence>
<evidence type="ECO:0000269" key="2">
    <source>
    </source>
</evidence>
<evidence type="ECO:0000269" key="3">
    <source>
    </source>
</evidence>
<evidence type="ECO:0000269" key="4">
    <source>
    </source>
</evidence>
<evidence type="ECO:0000305" key="5"/>
<evidence type="ECO:0007829" key="6">
    <source>
        <dbReference type="PDB" id="1ET0"/>
    </source>
</evidence>
<evidence type="ECO:0007829" key="7">
    <source>
        <dbReference type="PDB" id="1I2K"/>
    </source>
</evidence>
<comment type="function">
    <text evidence="3 4">Involved in the biosynthesis of p-aminobenzoate (PABA), a precursor of tetrahydrofolate. Converts 4-amino-4-deoxychorismate into 4-aminobenzoate (PABA) and pyruvate.</text>
</comment>
<comment type="catalytic activity">
    <reaction evidence="4">
        <text>4-amino-4-deoxychorismate = 4-aminobenzoate + pyruvate + H(+)</text>
        <dbReference type="Rhea" id="RHEA:16201"/>
        <dbReference type="ChEBI" id="CHEBI:15361"/>
        <dbReference type="ChEBI" id="CHEBI:15378"/>
        <dbReference type="ChEBI" id="CHEBI:17836"/>
        <dbReference type="ChEBI" id="CHEBI:58406"/>
        <dbReference type="EC" id="4.1.3.38"/>
    </reaction>
</comment>
<comment type="cofactor">
    <cofactor evidence="1 2 3">
        <name>pyridoxal 5'-phosphate</name>
        <dbReference type="ChEBI" id="CHEBI:597326"/>
    </cofactor>
</comment>
<comment type="pathway">
    <text>Cofactor biosynthesis; tetrahydrofolate biosynthesis; 4-aminobenzoate from chorismate: step 2/2.</text>
</comment>
<comment type="subunit">
    <text evidence="1 2 3 4">Homodimer.</text>
</comment>
<comment type="disruption phenotype">
    <text evidence="3">Cells lacking this gene are unable to produce PABA.</text>
</comment>
<comment type="similarity">
    <text evidence="5">Belongs to the class-IV pyridoxal-phosphate-dependent aminotransferase family.</text>
</comment>